<organism>
    <name type="scientific">Mus musculus</name>
    <name type="common">Mouse</name>
    <dbReference type="NCBI Taxonomy" id="10090"/>
    <lineage>
        <taxon>Eukaryota</taxon>
        <taxon>Metazoa</taxon>
        <taxon>Chordata</taxon>
        <taxon>Craniata</taxon>
        <taxon>Vertebrata</taxon>
        <taxon>Euteleostomi</taxon>
        <taxon>Mammalia</taxon>
        <taxon>Eutheria</taxon>
        <taxon>Euarchontoglires</taxon>
        <taxon>Glires</taxon>
        <taxon>Rodentia</taxon>
        <taxon>Myomorpha</taxon>
        <taxon>Muroidea</taxon>
        <taxon>Muridae</taxon>
        <taxon>Murinae</taxon>
        <taxon>Mus</taxon>
        <taxon>Mus</taxon>
    </lineage>
</organism>
<accession>P10855</accession>
<accession>P14096</accession>
<protein>
    <recommendedName>
        <fullName>C-C motif chemokine 3</fullName>
    </recommendedName>
    <alternativeName>
        <fullName>Heparin-binding chemotaxis protein</fullName>
    </alternativeName>
    <alternativeName>
        <fullName>L2G25B</fullName>
    </alternativeName>
    <alternativeName>
        <fullName>Macrophage inflammatory protein 1-alpha</fullName>
        <shortName>MIP-1-alpha</shortName>
    </alternativeName>
    <alternativeName>
        <fullName>SIS-alpha</fullName>
    </alternativeName>
    <alternativeName>
        <fullName>Small-inducible cytokine A3</fullName>
    </alternativeName>
    <alternativeName>
        <fullName>TY-5</fullName>
    </alternativeName>
</protein>
<sequence length="92" mass="10345">MKVSTTALAVLLCTMTLCNQVFSAPYGADTPTACCFSYSRKIPRQFIVDYFETSSLCSQPGVIFLTKRNRQICADSKETWVQEYITDLELNA</sequence>
<comment type="function">
    <text evidence="1">Monokine with inflammatory and chemokinetic properties. Binds to CCR1, CCR4 and CCR5. One of the major HIV-suppressive factors produced by CD8+ T-cells. Recombinant MIP-1-alpha induces a dose-dependent inhibition of different strains of HIV-1, HIV-2, and simian immunodeficiency virus (SIV).</text>
</comment>
<comment type="subunit">
    <text evidence="1">Self-associates. Also heterodimer of MIP-1-alpha(4-69) and MIP-1-beta(3-69). Interacts with CCR1.</text>
</comment>
<comment type="interaction">
    <interactant intactId="EBI-16188162">
        <id>P10855</id>
    </interactant>
    <interactant intactId="EBI-16188152">
        <id>E9M5R0</id>
        <label>RHVP.R17</label>
    </interactant>
    <organismsDiffer>true</organismsDiffer>
    <experiments>4</experiments>
</comment>
<comment type="subcellular location">
    <subcellularLocation>
        <location>Secreted</location>
    </subcellularLocation>
</comment>
<comment type="tissue specificity">
    <text>Expressed in lung, spleen, and pancreas.</text>
</comment>
<comment type="similarity">
    <text evidence="3">Belongs to the intercrine beta (chemokine CC) family.</text>
</comment>
<feature type="signal peptide" evidence="2">
    <location>
        <begin position="1"/>
        <end position="23"/>
    </location>
</feature>
<feature type="chain" id="PRO_0000005158" description="C-C motif chemokine 3">
    <location>
        <begin position="24"/>
        <end position="92"/>
    </location>
</feature>
<feature type="disulfide bond" evidence="1">
    <location>
        <begin position="34"/>
        <end position="57"/>
    </location>
</feature>
<feature type="disulfide bond" evidence="1">
    <location>
        <begin position="35"/>
        <end position="73"/>
    </location>
</feature>
<feature type="sequence conflict" description="In Ref. 3; AAA40146." evidence="3" ref="3">
    <original>F</original>
    <variation>L</variation>
    <location>
        <position position="22"/>
    </location>
</feature>
<feature type="sequence conflict" description="In Ref. 3; AAA40146." evidence="3" ref="3">
    <original>V</original>
    <variation>A</variation>
    <location>
        <position position="62"/>
    </location>
</feature>
<feature type="strand" evidence="4">
    <location>
        <begin position="34"/>
        <end position="37"/>
    </location>
</feature>
<feature type="helix" evidence="4">
    <location>
        <begin position="44"/>
        <end position="46"/>
    </location>
</feature>
<feature type="strand" evidence="4">
    <location>
        <begin position="47"/>
        <end position="52"/>
    </location>
</feature>
<feature type="strand" evidence="4">
    <location>
        <begin position="57"/>
        <end position="59"/>
    </location>
</feature>
<feature type="strand" evidence="4">
    <location>
        <begin position="61"/>
        <end position="66"/>
    </location>
</feature>
<feature type="strand" evidence="4">
    <location>
        <begin position="71"/>
        <end position="75"/>
    </location>
</feature>
<feature type="helix" evidence="4">
    <location>
        <begin position="79"/>
        <end position="89"/>
    </location>
</feature>
<keyword id="KW-0002">3D-structure</keyword>
<keyword id="KW-0145">Chemotaxis</keyword>
<keyword id="KW-0202">Cytokine</keyword>
<keyword id="KW-0903">Direct protein sequencing</keyword>
<keyword id="KW-1015">Disulfide bond</keyword>
<keyword id="KW-0395">Inflammatory response</keyword>
<keyword id="KW-1185">Reference proteome</keyword>
<keyword id="KW-0964">Secreted</keyword>
<keyword id="KW-0732">Signal</keyword>
<gene>
    <name type="primary">Ccl3</name>
    <name type="synonym">Mip1a</name>
    <name type="synonym">Scya3</name>
</gene>
<dbReference type="EMBL" id="M23447">
    <property type="protein sequence ID" value="AAA40146.1"/>
    <property type="molecule type" value="mRNA"/>
</dbReference>
<dbReference type="EMBL" id="X12531">
    <property type="protein sequence ID" value="CAA31047.1"/>
    <property type="molecule type" value="mRNA"/>
</dbReference>
<dbReference type="EMBL" id="X53372">
    <property type="protein sequence ID" value="CAA37452.1"/>
    <property type="molecule type" value="Genomic_DNA"/>
</dbReference>
<dbReference type="EMBL" id="J04491">
    <property type="protein sequence ID" value="AAA40304.1"/>
    <property type="molecule type" value="mRNA"/>
</dbReference>
<dbReference type="EMBL" id="M73061">
    <property type="protein sequence ID" value="AAA39707.1"/>
    <property type="molecule type" value="Genomic_DNA"/>
</dbReference>
<dbReference type="EMBL" id="AF065939">
    <property type="protein sequence ID" value="AAC17506.1"/>
    <property type="molecule type" value="mRNA"/>
</dbReference>
<dbReference type="EMBL" id="AF065940">
    <property type="protein sequence ID" value="AAC17507.1"/>
    <property type="molecule type" value="mRNA"/>
</dbReference>
<dbReference type="EMBL" id="AF065941">
    <property type="protein sequence ID" value="AAC17508.1"/>
    <property type="molecule type" value="mRNA"/>
</dbReference>
<dbReference type="EMBL" id="AF065942">
    <property type="protein sequence ID" value="AAC17509.1"/>
    <property type="molecule type" value="mRNA"/>
</dbReference>
<dbReference type="EMBL" id="AF065943">
    <property type="protein sequence ID" value="AAC17510.1"/>
    <property type="molecule type" value="mRNA"/>
</dbReference>
<dbReference type="CCDS" id="CCDS36255.1"/>
<dbReference type="PIR" id="S11685">
    <property type="entry name" value="A32393"/>
</dbReference>
<dbReference type="RefSeq" id="NP_035467.1">
    <property type="nucleotide sequence ID" value="NM_011337.2"/>
</dbReference>
<dbReference type="PDB" id="4ZLT">
    <property type="method" value="X-ray"/>
    <property type="resolution" value="3.00 A"/>
    <property type="chains" value="F/L=24-92"/>
</dbReference>
<dbReference type="PDBsum" id="4ZLT"/>
<dbReference type="SMR" id="P10855"/>
<dbReference type="BioGRID" id="203127">
    <property type="interactions" value="1"/>
</dbReference>
<dbReference type="DIP" id="DIP-61916N"/>
<dbReference type="FunCoup" id="P10855">
    <property type="interactions" value="622"/>
</dbReference>
<dbReference type="IntAct" id="P10855">
    <property type="interactions" value="1"/>
</dbReference>
<dbReference type="STRING" id="10090.ENSMUSP00000001008"/>
<dbReference type="PaxDb" id="10090-ENSMUSP00000001008"/>
<dbReference type="PeptideAtlas" id="P10855"/>
<dbReference type="DNASU" id="20302"/>
<dbReference type="Ensembl" id="ENSMUST00000001008.6">
    <property type="protein sequence ID" value="ENSMUSP00000001008.6"/>
    <property type="gene ID" value="ENSMUSG00000000982.6"/>
</dbReference>
<dbReference type="GeneID" id="20302"/>
<dbReference type="KEGG" id="mmu:20302"/>
<dbReference type="UCSC" id="uc007kpn.1">
    <property type="organism name" value="mouse"/>
</dbReference>
<dbReference type="AGR" id="MGI:98260"/>
<dbReference type="CTD" id="6348"/>
<dbReference type="MGI" id="MGI:98260">
    <property type="gene designation" value="Ccl3"/>
</dbReference>
<dbReference type="VEuPathDB" id="HostDB:ENSMUSG00000000982"/>
<dbReference type="eggNOG" id="ENOG502SAF0">
    <property type="taxonomic scope" value="Eukaryota"/>
</dbReference>
<dbReference type="GeneTree" id="ENSGT01100000263482"/>
<dbReference type="HOGENOM" id="CLU_141716_4_2_1"/>
<dbReference type="InParanoid" id="P10855"/>
<dbReference type="OMA" id="NTPADCC"/>
<dbReference type="OrthoDB" id="8934837at2759"/>
<dbReference type="PhylomeDB" id="P10855"/>
<dbReference type="TreeFam" id="TF334888"/>
<dbReference type="Reactome" id="R-MMU-380108">
    <property type="pathway name" value="Chemokine receptors bind chemokines"/>
</dbReference>
<dbReference type="BioGRID-ORCS" id="20302">
    <property type="hits" value="7 hits in 81 CRISPR screens"/>
</dbReference>
<dbReference type="PRO" id="PR:P10855"/>
<dbReference type="Proteomes" id="UP000000589">
    <property type="component" value="Chromosome 11"/>
</dbReference>
<dbReference type="RNAct" id="P10855">
    <property type="molecule type" value="protein"/>
</dbReference>
<dbReference type="Bgee" id="ENSMUSG00000000982">
    <property type="expression patterns" value="Expressed in granulocyte and 43 other cell types or tissues"/>
</dbReference>
<dbReference type="ExpressionAtlas" id="P10855">
    <property type="expression patterns" value="baseline and differential"/>
</dbReference>
<dbReference type="GO" id="GO:0005737">
    <property type="term" value="C:cytoplasm"/>
    <property type="evidence" value="ECO:0000250"/>
    <property type="project" value="UniProtKB"/>
</dbReference>
<dbReference type="GO" id="GO:0005829">
    <property type="term" value="C:cytosol"/>
    <property type="evidence" value="ECO:0000250"/>
    <property type="project" value="UniProtKB"/>
</dbReference>
<dbReference type="GO" id="GO:0005615">
    <property type="term" value="C:extracellular space"/>
    <property type="evidence" value="ECO:0000314"/>
    <property type="project" value="MGI"/>
</dbReference>
<dbReference type="GO" id="GO:0042056">
    <property type="term" value="F:chemoattractant activity"/>
    <property type="evidence" value="ECO:0000250"/>
    <property type="project" value="UniProtKB"/>
</dbReference>
<dbReference type="GO" id="GO:0008009">
    <property type="term" value="F:chemokine activity"/>
    <property type="evidence" value="ECO:0000314"/>
    <property type="project" value="MGI"/>
</dbReference>
<dbReference type="GO" id="GO:0016301">
    <property type="term" value="F:kinase activity"/>
    <property type="evidence" value="ECO:0000250"/>
    <property type="project" value="UniProtKB"/>
</dbReference>
<dbReference type="GO" id="GO:0016004">
    <property type="term" value="F:phospholipase activator activity"/>
    <property type="evidence" value="ECO:0000250"/>
    <property type="project" value="UniProtKB"/>
</dbReference>
<dbReference type="GO" id="GO:0004672">
    <property type="term" value="F:protein kinase activity"/>
    <property type="evidence" value="ECO:0000250"/>
    <property type="project" value="UniProtKB"/>
</dbReference>
<dbReference type="GO" id="GO:0043615">
    <property type="term" value="P:astrocyte cell migration"/>
    <property type="evidence" value="ECO:0000314"/>
    <property type="project" value="UniProtKB"/>
</dbReference>
<dbReference type="GO" id="GO:0006816">
    <property type="term" value="P:calcium ion transport"/>
    <property type="evidence" value="ECO:0000250"/>
    <property type="project" value="UniProtKB"/>
</dbReference>
<dbReference type="GO" id="GO:0019722">
    <property type="term" value="P:calcium-mediated signaling"/>
    <property type="evidence" value="ECO:0000250"/>
    <property type="project" value="UniProtKB"/>
</dbReference>
<dbReference type="GO" id="GO:0001775">
    <property type="term" value="P:cell activation"/>
    <property type="evidence" value="ECO:0000250"/>
    <property type="project" value="UniProtKB"/>
</dbReference>
<dbReference type="GO" id="GO:0007267">
    <property type="term" value="P:cell-cell signaling"/>
    <property type="evidence" value="ECO:0000250"/>
    <property type="project" value="UniProtKB"/>
</dbReference>
<dbReference type="GO" id="GO:0006935">
    <property type="term" value="P:chemotaxis"/>
    <property type="evidence" value="ECO:0000250"/>
    <property type="project" value="UniProtKB"/>
</dbReference>
<dbReference type="GO" id="GO:0007010">
    <property type="term" value="P:cytoskeleton organization"/>
    <property type="evidence" value="ECO:0000250"/>
    <property type="project" value="UniProtKB"/>
</dbReference>
<dbReference type="GO" id="GO:0048245">
    <property type="term" value="P:eosinophil chemotaxis"/>
    <property type="evidence" value="ECO:0000250"/>
    <property type="project" value="UniProtKB"/>
</dbReference>
<dbReference type="GO" id="GO:0043308">
    <property type="term" value="P:eosinophil degranulation"/>
    <property type="evidence" value="ECO:0000250"/>
    <property type="project" value="UniProtKB"/>
</dbReference>
<dbReference type="GO" id="GO:0006887">
    <property type="term" value="P:exocytosis"/>
    <property type="evidence" value="ECO:0000250"/>
    <property type="project" value="UniProtKB"/>
</dbReference>
<dbReference type="GO" id="GO:0071621">
    <property type="term" value="P:granulocyte chemotaxis"/>
    <property type="evidence" value="ECO:0000250"/>
    <property type="project" value="UniProtKB"/>
</dbReference>
<dbReference type="GO" id="GO:0006954">
    <property type="term" value="P:inflammatory response"/>
    <property type="evidence" value="ECO:0000250"/>
    <property type="project" value="UniProtKB"/>
</dbReference>
<dbReference type="GO" id="GO:0006874">
    <property type="term" value="P:intracellular calcium ion homeostasis"/>
    <property type="evidence" value="ECO:0000250"/>
    <property type="project" value="UniProtKB"/>
</dbReference>
<dbReference type="GO" id="GO:0048247">
    <property type="term" value="P:lymphocyte chemotaxis"/>
    <property type="evidence" value="ECO:0000250"/>
    <property type="project" value="UniProtKB"/>
</dbReference>
<dbReference type="GO" id="GO:0048246">
    <property type="term" value="P:macrophage chemotaxis"/>
    <property type="evidence" value="ECO:0000316"/>
    <property type="project" value="UniProtKB"/>
</dbReference>
<dbReference type="GO" id="GO:0002548">
    <property type="term" value="P:monocyte chemotaxis"/>
    <property type="evidence" value="ECO:0000250"/>
    <property type="project" value="UniProtKB"/>
</dbReference>
<dbReference type="GO" id="GO:0043922">
    <property type="term" value="P:negative regulation by host of viral transcription"/>
    <property type="evidence" value="ECO:0000250"/>
    <property type="project" value="UniProtKB"/>
</dbReference>
<dbReference type="GO" id="GO:0010629">
    <property type="term" value="P:negative regulation of gene expression"/>
    <property type="evidence" value="ECO:0000250"/>
    <property type="project" value="UniProtKB"/>
</dbReference>
<dbReference type="GO" id="GO:0045671">
    <property type="term" value="P:negative regulation of osteoclast differentiation"/>
    <property type="evidence" value="ECO:0000250"/>
    <property type="project" value="UniProtKB"/>
</dbReference>
<dbReference type="GO" id="GO:0030593">
    <property type="term" value="P:neutrophil chemotaxis"/>
    <property type="evidence" value="ECO:0000250"/>
    <property type="project" value="UniProtKB"/>
</dbReference>
<dbReference type="GO" id="GO:0001649">
    <property type="term" value="P:osteoblast differentiation"/>
    <property type="evidence" value="ECO:0000250"/>
    <property type="project" value="UniProtKB"/>
</dbReference>
<dbReference type="GO" id="GO:0051928">
    <property type="term" value="P:positive regulation of calcium ion transport"/>
    <property type="evidence" value="ECO:0000250"/>
    <property type="project" value="UniProtKB"/>
</dbReference>
<dbReference type="GO" id="GO:0050850">
    <property type="term" value="P:positive regulation of calcium-mediated signaling"/>
    <property type="evidence" value="ECO:0000250"/>
    <property type="project" value="UniProtKB"/>
</dbReference>
<dbReference type="GO" id="GO:0030335">
    <property type="term" value="P:positive regulation of cell migration"/>
    <property type="evidence" value="ECO:0000250"/>
    <property type="project" value="UniProtKB"/>
</dbReference>
<dbReference type="GO" id="GO:0007204">
    <property type="term" value="P:positive regulation of cytosolic calcium ion concentration"/>
    <property type="evidence" value="ECO:0007669"/>
    <property type="project" value="Ensembl"/>
</dbReference>
<dbReference type="GO" id="GO:0070374">
    <property type="term" value="P:positive regulation of ERK1 and ERK2 cascade"/>
    <property type="evidence" value="ECO:0000250"/>
    <property type="project" value="UniProtKB"/>
</dbReference>
<dbReference type="GO" id="GO:0010628">
    <property type="term" value="P:positive regulation of gene expression"/>
    <property type="evidence" value="ECO:0000250"/>
    <property type="project" value="UniProtKB"/>
</dbReference>
<dbReference type="GO" id="GO:0050729">
    <property type="term" value="P:positive regulation of inflammatory response"/>
    <property type="evidence" value="ECO:0000316"/>
    <property type="project" value="UniProtKB"/>
</dbReference>
<dbReference type="GO" id="GO:0032731">
    <property type="term" value="P:positive regulation of interleukin-1 beta production"/>
    <property type="evidence" value="ECO:0000316"/>
    <property type="project" value="UniProtKB"/>
</dbReference>
<dbReference type="GO" id="GO:2000503">
    <property type="term" value="P:positive regulation of natural killer cell chemotaxis"/>
    <property type="evidence" value="ECO:0000250"/>
    <property type="project" value="UniProtKB"/>
</dbReference>
<dbReference type="GO" id="GO:0043525">
    <property type="term" value="P:positive regulation of neuron apoptotic process"/>
    <property type="evidence" value="ECO:0000316"/>
    <property type="project" value="UniProtKB"/>
</dbReference>
<dbReference type="GO" id="GO:0045672">
    <property type="term" value="P:positive regulation of osteoclast differentiation"/>
    <property type="evidence" value="ECO:0007669"/>
    <property type="project" value="Ensembl"/>
</dbReference>
<dbReference type="GO" id="GO:0045944">
    <property type="term" value="P:positive regulation of transcription by RNA polymerase II"/>
    <property type="evidence" value="ECO:0000315"/>
    <property type="project" value="UniProtKB"/>
</dbReference>
<dbReference type="GO" id="GO:0032760">
    <property type="term" value="P:positive regulation of tumor necrosis factor production"/>
    <property type="evidence" value="ECO:0000316"/>
    <property type="project" value="UniProtKB"/>
</dbReference>
<dbReference type="GO" id="GO:0008360">
    <property type="term" value="P:regulation of cell shape"/>
    <property type="evidence" value="ECO:0000314"/>
    <property type="project" value="UniProtKB"/>
</dbReference>
<dbReference type="GO" id="GO:0051930">
    <property type="term" value="P:regulation of sensory perception of pain"/>
    <property type="evidence" value="ECO:0000250"/>
    <property type="project" value="UniProtKB"/>
</dbReference>
<dbReference type="GO" id="GO:0014808">
    <property type="term" value="P:release of sequestered calcium ion into cytosol by sarcoplasmic reticulum"/>
    <property type="evidence" value="ECO:0000250"/>
    <property type="project" value="UniProtKB"/>
</dbReference>
<dbReference type="GO" id="GO:0070723">
    <property type="term" value="P:response to cholesterol"/>
    <property type="evidence" value="ECO:0000250"/>
    <property type="project" value="UniProtKB"/>
</dbReference>
<dbReference type="GO" id="GO:0009636">
    <property type="term" value="P:response to toxic substance"/>
    <property type="evidence" value="ECO:0000250"/>
    <property type="project" value="UniProtKB"/>
</dbReference>
<dbReference type="GO" id="GO:0009410">
    <property type="term" value="P:response to xenobiotic stimulus"/>
    <property type="evidence" value="ECO:0007669"/>
    <property type="project" value="Ensembl"/>
</dbReference>
<dbReference type="GO" id="GO:0023052">
    <property type="term" value="P:signaling"/>
    <property type="evidence" value="ECO:0000250"/>
    <property type="project" value="UniProtKB"/>
</dbReference>
<dbReference type="GO" id="GO:0010818">
    <property type="term" value="P:T cell chemotaxis"/>
    <property type="evidence" value="ECO:0000250"/>
    <property type="project" value="UniProtKB"/>
</dbReference>
<dbReference type="CDD" id="cd00272">
    <property type="entry name" value="Chemokine_CC"/>
    <property type="match status" value="1"/>
</dbReference>
<dbReference type="FunFam" id="2.40.50.40:FF:000002">
    <property type="entry name" value="C-C motif chemokine"/>
    <property type="match status" value="1"/>
</dbReference>
<dbReference type="Gene3D" id="2.40.50.40">
    <property type="match status" value="1"/>
</dbReference>
<dbReference type="InterPro" id="IPR039809">
    <property type="entry name" value="Chemokine_b/g/d"/>
</dbReference>
<dbReference type="InterPro" id="IPR000827">
    <property type="entry name" value="Chemokine_CC_CS"/>
</dbReference>
<dbReference type="InterPro" id="IPR001811">
    <property type="entry name" value="Chemokine_IL8-like_dom"/>
</dbReference>
<dbReference type="InterPro" id="IPR036048">
    <property type="entry name" value="Interleukin_8-like_sf"/>
</dbReference>
<dbReference type="PANTHER" id="PTHR12015:SF183">
    <property type="entry name" value="C-C MOTIF CHEMOKINE 3"/>
    <property type="match status" value="1"/>
</dbReference>
<dbReference type="PANTHER" id="PTHR12015">
    <property type="entry name" value="SMALL INDUCIBLE CYTOKINE A"/>
    <property type="match status" value="1"/>
</dbReference>
<dbReference type="Pfam" id="PF00048">
    <property type="entry name" value="IL8"/>
    <property type="match status" value="1"/>
</dbReference>
<dbReference type="SMART" id="SM00199">
    <property type="entry name" value="SCY"/>
    <property type="match status" value="1"/>
</dbReference>
<dbReference type="SUPFAM" id="SSF54117">
    <property type="entry name" value="Interleukin 8-like chemokines"/>
    <property type="match status" value="1"/>
</dbReference>
<dbReference type="PROSITE" id="PS00472">
    <property type="entry name" value="SMALL_CYTOKINES_CC"/>
    <property type="match status" value="1"/>
</dbReference>
<reference key="1">
    <citation type="journal article" date="1988" name="J. Exp. Med.">
        <title>Cloning and characterization of a cDNA for murine macrophage inflammatory protein (MIP), a novel monokine with inflammatory and chemokinetic properties.</title>
        <authorList>
            <person name="Davatelis G."/>
            <person name="Tekamp-Olson P."/>
            <person name="Wolpe S.D."/>
            <person name="Hermsen K."/>
            <person name="Luedke C."/>
            <person name="Gallegos C."/>
            <person name="Coit D."/>
            <person name="Merryweather J."/>
            <person name="Cerami A."/>
        </authorList>
    </citation>
    <scope>NUCLEOTIDE SEQUENCE</scope>
</reference>
<reference key="2">
    <citation type="journal article" date="1989" name="J. Exp. Med.">
        <authorList>
            <person name="Davatelis G."/>
            <person name="Tekamp-Olson P."/>
            <person name="Wolpe S.D."/>
            <person name="Hermsen K."/>
            <person name="Luedke C."/>
            <person name="Gallegos C."/>
            <person name="Coit D."/>
            <person name="Merryweather J."/>
            <person name="Cerami A."/>
        </authorList>
    </citation>
    <scope>ERRATUM OF PUBMED:3290382</scope>
    <scope>SEQUENCE REVISION</scope>
</reference>
<reference key="3">
    <citation type="journal article" date="1989" name="J. Immunol.">
        <title>A family of small inducible proteins secreted by leukocytes are members of a new superfamily that includes leukocyte and fibroblast-derived inflammatory agents, growth factors, and indicators of various activation processes.</title>
        <authorList>
            <person name="Brown K.D."/>
            <person name="Zurawski S.M."/>
            <person name="Mosmann T.R."/>
            <person name="Zurawski G."/>
        </authorList>
    </citation>
    <scope>NUCLEOTIDE SEQUENCE [MRNA]</scope>
</reference>
<reference key="4">
    <citation type="journal article" date="1990" name="Nucleic Acids Res.">
        <title>Sequence of the murine haemopoietic stem cell inhibitor/macrophage inflammatory protein 1 alpha gene.</title>
        <authorList>
            <person name="Grove M."/>
            <person name="Lowe S."/>
            <person name="Graham G."/>
            <person name="Pragnell I."/>
            <person name="Plumb M."/>
        </authorList>
    </citation>
    <scope>NUCLEOTIDE SEQUENCE [GENOMIC DNA]</scope>
    <source>
        <strain>DBA/2J</strain>
    </source>
</reference>
<reference key="5">
    <citation type="journal article" date="1989" name="Proc. Natl. Acad. Sci. U.S.A.">
        <title>cDNA sequences of two inducible T-cell genes.</title>
        <authorList>
            <person name="Kwon B.S."/>
            <person name="Weissman S.M."/>
        </authorList>
    </citation>
    <scope>NUCLEOTIDE SEQUENCE [MRNA]</scope>
</reference>
<reference key="6">
    <citation type="journal article" date="1991" name="J. Immunol.">
        <title>Genomic structure of murine macrophage inflammatory protein-1 alpha and conservation of potential regulatory sequences with a human homolog, LD78.</title>
        <authorList>
            <person name="Widmer U."/>
            <person name="Yang Z."/>
            <person name="van Deventer S."/>
            <person name="Manogue K.R."/>
            <person name="Sherry B."/>
            <person name="Cerami A."/>
        </authorList>
    </citation>
    <scope>NUCLEOTIDE SEQUENCE</scope>
</reference>
<reference key="7">
    <citation type="journal article" date="1999" name="J. Immunol.">
        <title>Sequence polymorphisms in the chemokines Scya1 (TCA-3), Scya2 (monocyte chemoattractant protein (MCP)-1), and Scya12 (MCP-5) are candidates for eae7, a locus controlling susceptibility to monophasic remitting/nonrelapsing experimental allergic encephalomyelitis.</title>
        <authorList>
            <person name="Teuscher C."/>
            <person name="Butterfield R.J."/>
            <person name="Ma R.Z."/>
            <person name="Zachary J.F."/>
            <person name="Doerge R.W."/>
            <person name="Blankenhorn E.P."/>
        </authorList>
    </citation>
    <scope>NUCLEOTIDE SEQUENCE</scope>
    <source>
        <strain>B10.S/J</strain>
        <strain>BALB/cJ</strain>
        <strain>DBA/2J</strain>
        <strain>NOD/LtJ</strain>
        <strain>SJL/J</strain>
        <tissue>Spleen</tissue>
    </source>
</reference>
<reference key="8">
    <citation type="journal article" date="1988" name="J. Exp. Med.">
        <title>Macrophages secrete a novel heparin-binding protein with inflammatory and neutrophil chemokinetic properties.</title>
        <authorList>
            <person name="Wolpe S.D."/>
            <person name="Davatelis G."/>
            <person name="Sherry B."/>
            <person name="Beutler B."/>
            <person name="Hesse D.G."/>
            <person name="Nguyen H.T."/>
            <person name="Moldawer L.L."/>
            <person name="Nathan C.F."/>
            <person name="Lowry S.F."/>
            <person name="Cerami A."/>
        </authorList>
    </citation>
    <scope>PROTEIN SEQUENCE OF 24-42</scope>
</reference>
<evidence type="ECO:0000250" key="1">
    <source>
        <dbReference type="UniProtKB" id="P10147"/>
    </source>
</evidence>
<evidence type="ECO:0000269" key="2">
    <source>
    </source>
</evidence>
<evidence type="ECO:0000305" key="3"/>
<evidence type="ECO:0007829" key="4">
    <source>
        <dbReference type="PDB" id="4ZLT"/>
    </source>
</evidence>
<proteinExistence type="evidence at protein level"/>
<name>CCL3_MOUSE</name>